<name>FEN1_TETTS</name>
<protein>
    <recommendedName>
        <fullName evidence="1">Flap endonuclease 1</fullName>
        <shortName evidence="1">FEN-1</shortName>
        <ecNumber evidence="1">3.1.-.-</ecNumber>
    </recommendedName>
    <alternativeName>
        <fullName evidence="1">Flap structure-specific endonuclease 1</fullName>
    </alternativeName>
</protein>
<reference key="1">
    <citation type="journal article" date="2006" name="PLoS Biol.">
        <title>Macronuclear genome sequence of the ciliate Tetrahymena thermophila, a model eukaryote.</title>
        <authorList>
            <person name="Eisen J.A."/>
            <person name="Coyne R.S."/>
            <person name="Wu M."/>
            <person name="Wu D."/>
            <person name="Thiagarajan M."/>
            <person name="Wortman J.R."/>
            <person name="Badger J.H."/>
            <person name="Ren Q."/>
            <person name="Amedeo P."/>
            <person name="Jones K.M."/>
            <person name="Tallon L.J."/>
            <person name="Delcher A.L."/>
            <person name="Salzberg S.L."/>
            <person name="Silva J.C."/>
            <person name="Haas B.J."/>
            <person name="Majoros W.H."/>
            <person name="Farzad M."/>
            <person name="Carlton J.M."/>
            <person name="Smith R.K. Jr."/>
            <person name="Garg J."/>
            <person name="Pearlman R.E."/>
            <person name="Karrer K.M."/>
            <person name="Sun L."/>
            <person name="Manning G."/>
            <person name="Elde N.C."/>
            <person name="Turkewitz A.P."/>
            <person name="Asai D.J."/>
            <person name="Wilkes D.E."/>
            <person name="Wang Y."/>
            <person name="Cai H."/>
            <person name="Collins K."/>
            <person name="Stewart B.A."/>
            <person name="Lee S.R."/>
            <person name="Wilamowska K."/>
            <person name="Weinberg Z."/>
            <person name="Ruzzo W.L."/>
            <person name="Wloga D."/>
            <person name="Gaertig J."/>
            <person name="Frankel J."/>
            <person name="Tsao C.-C."/>
            <person name="Gorovsky M.A."/>
            <person name="Keeling P.J."/>
            <person name="Waller R.F."/>
            <person name="Patron N.J."/>
            <person name="Cherry J.M."/>
            <person name="Stover N.A."/>
            <person name="Krieger C.J."/>
            <person name="del Toro C."/>
            <person name="Ryder H.F."/>
            <person name="Williamson S.C."/>
            <person name="Barbeau R.A."/>
            <person name="Hamilton E.P."/>
            <person name="Orias E."/>
        </authorList>
    </citation>
    <scope>NUCLEOTIDE SEQUENCE [LARGE SCALE GENOMIC DNA]</scope>
    <source>
        <strain>SB210</strain>
    </source>
</reference>
<comment type="function">
    <text evidence="1">Structure-specific nuclease with 5'-flap endonuclease and 5'-3' exonuclease activities involved in DNA replication and repair. During DNA replication, cleaves the 5'-overhanging flap structure that is generated by displacement synthesis when DNA polymerase encounters the 5'-end of a downstream Okazaki fragment. It enters the flap from the 5'-end and then tracks to cleave the flap base, leaving a nick for ligation. Also involved in the long patch base excision repair (LP-BER) pathway, by cleaving within the apurinic/apyrimidinic (AP) site-terminated flap. Acts as a genome stabilization factor that prevents flaps from equilibrating into structures that lead to duplications and deletions. Also possesses 5'-3' exonuclease activity on nicked or gapped double-stranded DNA, and exhibits RNase H activity. Also involved in replication and repair of rDNA and in repairing mitochondrial DNA.</text>
</comment>
<comment type="cofactor">
    <cofactor evidence="1">
        <name>Mg(2+)</name>
        <dbReference type="ChEBI" id="CHEBI:18420"/>
    </cofactor>
    <text evidence="1">Binds 2 magnesium ions per subunit. They probably participate in the reaction catalyzed by the enzyme. May bind an additional third magnesium ion after substrate binding.</text>
</comment>
<comment type="subunit">
    <text evidence="1">Interacts with PCNA. Three molecules of FEN1 bind to one PCNA trimer with each molecule binding to one PCNA monomer. PCNA stimulates the nuclease activity without altering cleavage specificity.</text>
</comment>
<comment type="subcellular location">
    <subcellularLocation>
        <location evidence="1">Nucleus</location>
        <location evidence="1">Nucleolus</location>
    </subcellularLocation>
    <subcellularLocation>
        <location evidence="1">Nucleus</location>
        <location evidence="1">Nucleoplasm</location>
    </subcellularLocation>
    <subcellularLocation>
        <location evidence="1">Mitochondrion</location>
    </subcellularLocation>
    <text evidence="1">Resides mostly in the nucleoli and relocalizes to the nucleoplasm upon DNA damage.</text>
</comment>
<comment type="PTM">
    <text evidence="1">Phosphorylated. Phosphorylation upon DNA damage induces relocalization to the nuclear plasma.</text>
</comment>
<comment type="similarity">
    <text evidence="1">Belongs to the XPG/RAD2 endonuclease family. FEN1 subfamily.</text>
</comment>
<proteinExistence type="inferred from homology"/>
<sequence>MGIHKLMDLLKEKAPGCIKTSDLKFYAGRMIACDASMAMYQFLATTSSASDFQIQNLTDKDGNKTGHLVGLLNRTVMLIENGLKPVWVFDGKPPQFKSGELARRQKAKDEAAEKQKTAIETGDMQEALKQEQRNLHITKEMKADAIKLLQLVGVPVILAPCEAEAQCAALAKAKKVFATVTEDMDALTFATPFLLRNLNSKKEPITEINYEKMLQELKLSHNEFVDLCILCGCDYLGRIEGVGPVNAFKLITEHKSLEKVLEHMEEVNKQSTKKQKYTVPSSYDYVSARDLFINPEVTDPETIQLEWKKPDVEELKKFLVEEKGFSEQRVTSQMEKVLNAKEHKGSQTRLNDFFKVQPKDTSSTSKASKKPTNTKSANKKGGKK</sequence>
<evidence type="ECO:0000255" key="1">
    <source>
        <dbReference type="HAMAP-Rule" id="MF_03140"/>
    </source>
</evidence>
<evidence type="ECO:0000256" key="2">
    <source>
        <dbReference type="SAM" id="MobiDB-lite"/>
    </source>
</evidence>
<accession>A4VDN2</accession>
<feature type="chain" id="PRO_0000403543" description="Flap endonuclease 1">
    <location>
        <begin position="1"/>
        <end position="384"/>
    </location>
</feature>
<feature type="region of interest" description="N-domain">
    <location>
        <begin position="1"/>
        <end position="108"/>
    </location>
</feature>
<feature type="region of interest" description="I-domain">
    <location>
        <begin position="126"/>
        <end position="254"/>
    </location>
</feature>
<feature type="region of interest" description="Disordered" evidence="2">
    <location>
        <begin position="340"/>
        <end position="384"/>
    </location>
</feature>
<feature type="region of interest" description="Interaction with PCNA" evidence="1">
    <location>
        <begin position="346"/>
        <end position="354"/>
    </location>
</feature>
<feature type="compositionally biased region" description="Low complexity" evidence="2">
    <location>
        <begin position="359"/>
        <end position="376"/>
    </location>
</feature>
<feature type="binding site" evidence="1">
    <location>
        <position position="34"/>
    </location>
    <ligand>
        <name>Mg(2+)</name>
        <dbReference type="ChEBI" id="CHEBI:18420"/>
        <label>1</label>
    </ligand>
</feature>
<feature type="binding site" evidence="1">
    <location>
        <position position="74"/>
    </location>
    <ligand>
        <name>DNA</name>
        <dbReference type="ChEBI" id="CHEBI:16991"/>
    </ligand>
</feature>
<feature type="binding site" evidence="1">
    <location>
        <position position="90"/>
    </location>
    <ligand>
        <name>Mg(2+)</name>
        <dbReference type="ChEBI" id="CHEBI:18420"/>
        <label>1</label>
    </ligand>
</feature>
<feature type="binding site" evidence="1">
    <location>
        <position position="162"/>
    </location>
    <ligand>
        <name>DNA</name>
        <dbReference type="ChEBI" id="CHEBI:16991"/>
    </ligand>
</feature>
<feature type="binding site" evidence="1">
    <location>
        <position position="162"/>
    </location>
    <ligand>
        <name>Mg(2+)</name>
        <dbReference type="ChEBI" id="CHEBI:18420"/>
        <label>1</label>
    </ligand>
</feature>
<feature type="binding site" evidence="1">
    <location>
        <position position="164"/>
    </location>
    <ligand>
        <name>Mg(2+)</name>
        <dbReference type="ChEBI" id="CHEBI:18420"/>
        <label>1</label>
    </ligand>
</feature>
<feature type="binding site" evidence="1">
    <location>
        <position position="183"/>
    </location>
    <ligand>
        <name>Mg(2+)</name>
        <dbReference type="ChEBI" id="CHEBI:18420"/>
        <label>2</label>
    </ligand>
</feature>
<feature type="binding site" evidence="1">
    <location>
        <position position="185"/>
    </location>
    <ligand>
        <name>Mg(2+)</name>
        <dbReference type="ChEBI" id="CHEBI:18420"/>
        <label>2</label>
    </ligand>
</feature>
<feature type="binding site" evidence="1">
    <location>
        <position position="232"/>
    </location>
    <ligand>
        <name>DNA</name>
        <dbReference type="ChEBI" id="CHEBI:16991"/>
    </ligand>
</feature>
<feature type="binding site" evidence="1">
    <location>
        <position position="234"/>
    </location>
    <ligand>
        <name>DNA</name>
        <dbReference type="ChEBI" id="CHEBI:16991"/>
    </ligand>
</feature>
<feature type="binding site" evidence="1">
    <location>
        <position position="234"/>
    </location>
    <ligand>
        <name>Mg(2+)</name>
        <dbReference type="ChEBI" id="CHEBI:18420"/>
        <label>2</label>
    </ligand>
</feature>
<dbReference type="EC" id="3.1.-.-" evidence="1"/>
<dbReference type="EMBL" id="GG662663">
    <property type="protein sequence ID" value="EDK31639.1"/>
    <property type="molecule type" value="Genomic_DNA"/>
</dbReference>
<dbReference type="RefSeq" id="XP_001470841.1">
    <property type="nucleotide sequence ID" value="XM_001470791.2"/>
</dbReference>
<dbReference type="SMR" id="A4VDN2"/>
<dbReference type="FunCoup" id="A4VDN2">
    <property type="interactions" value="597"/>
</dbReference>
<dbReference type="STRING" id="312017.A4VDN2"/>
<dbReference type="EnsemblProtists" id="EDK31639">
    <property type="protein sequence ID" value="EDK31639"/>
    <property type="gene ID" value="TTHERM_00437617"/>
</dbReference>
<dbReference type="GeneID" id="7843316"/>
<dbReference type="KEGG" id="tet:TTHERM_00437617"/>
<dbReference type="eggNOG" id="KOG2519">
    <property type="taxonomic scope" value="Eukaryota"/>
</dbReference>
<dbReference type="HOGENOM" id="CLU_032444_2_0_1"/>
<dbReference type="InParanoid" id="A4VDN2"/>
<dbReference type="OMA" id="MGIPWVQ"/>
<dbReference type="OrthoDB" id="1937206at2759"/>
<dbReference type="Proteomes" id="UP000009168">
    <property type="component" value="Unassembled WGS sequence"/>
</dbReference>
<dbReference type="GO" id="GO:0005739">
    <property type="term" value="C:mitochondrion"/>
    <property type="evidence" value="ECO:0007669"/>
    <property type="project" value="UniProtKB-SubCell"/>
</dbReference>
<dbReference type="GO" id="GO:0005730">
    <property type="term" value="C:nucleolus"/>
    <property type="evidence" value="ECO:0007669"/>
    <property type="project" value="UniProtKB-SubCell"/>
</dbReference>
<dbReference type="GO" id="GO:0005654">
    <property type="term" value="C:nucleoplasm"/>
    <property type="evidence" value="ECO:0007669"/>
    <property type="project" value="UniProtKB-SubCell"/>
</dbReference>
<dbReference type="GO" id="GO:0008409">
    <property type="term" value="F:5'-3' exonuclease activity"/>
    <property type="evidence" value="ECO:0007669"/>
    <property type="project" value="UniProtKB-UniRule"/>
</dbReference>
<dbReference type="GO" id="GO:0017108">
    <property type="term" value="F:5'-flap endonuclease activity"/>
    <property type="evidence" value="ECO:0007669"/>
    <property type="project" value="UniProtKB-UniRule"/>
</dbReference>
<dbReference type="GO" id="GO:0003677">
    <property type="term" value="F:DNA binding"/>
    <property type="evidence" value="ECO:0007669"/>
    <property type="project" value="UniProtKB-UniRule"/>
</dbReference>
<dbReference type="GO" id="GO:0000287">
    <property type="term" value="F:magnesium ion binding"/>
    <property type="evidence" value="ECO:0007669"/>
    <property type="project" value="UniProtKB-UniRule"/>
</dbReference>
<dbReference type="GO" id="GO:0006284">
    <property type="term" value="P:base-excision repair"/>
    <property type="evidence" value="ECO:0007669"/>
    <property type="project" value="UniProtKB-UniRule"/>
</dbReference>
<dbReference type="GO" id="GO:0043137">
    <property type="term" value="P:DNA replication, removal of RNA primer"/>
    <property type="evidence" value="ECO:0007669"/>
    <property type="project" value="UniProtKB-UniRule"/>
</dbReference>
<dbReference type="CDD" id="cd09907">
    <property type="entry name" value="H3TH_FEN1-Euk"/>
    <property type="match status" value="1"/>
</dbReference>
<dbReference type="CDD" id="cd09867">
    <property type="entry name" value="PIN_FEN1"/>
    <property type="match status" value="1"/>
</dbReference>
<dbReference type="FunFam" id="1.10.150.20:FF:000009">
    <property type="entry name" value="Flap endonuclease 1"/>
    <property type="match status" value="1"/>
</dbReference>
<dbReference type="FunFam" id="3.40.50.1010:FF:000016">
    <property type="entry name" value="Flap endonuclease 1"/>
    <property type="match status" value="1"/>
</dbReference>
<dbReference type="Gene3D" id="1.10.150.20">
    <property type="entry name" value="5' to 3' exonuclease, C-terminal subdomain"/>
    <property type="match status" value="1"/>
</dbReference>
<dbReference type="Gene3D" id="3.40.50.1010">
    <property type="entry name" value="5'-nuclease"/>
    <property type="match status" value="1"/>
</dbReference>
<dbReference type="HAMAP" id="MF_00614">
    <property type="entry name" value="Fen"/>
    <property type="match status" value="1"/>
</dbReference>
<dbReference type="InterPro" id="IPR036279">
    <property type="entry name" value="5-3_exonuclease_C_sf"/>
</dbReference>
<dbReference type="InterPro" id="IPR023426">
    <property type="entry name" value="Flap_endonuc"/>
</dbReference>
<dbReference type="InterPro" id="IPR008918">
    <property type="entry name" value="HhH2"/>
</dbReference>
<dbReference type="InterPro" id="IPR029060">
    <property type="entry name" value="PIN-like_dom_sf"/>
</dbReference>
<dbReference type="InterPro" id="IPR006086">
    <property type="entry name" value="XPG-I_dom"/>
</dbReference>
<dbReference type="InterPro" id="IPR006084">
    <property type="entry name" value="XPG/Rad2"/>
</dbReference>
<dbReference type="InterPro" id="IPR019974">
    <property type="entry name" value="XPG_CS"/>
</dbReference>
<dbReference type="InterPro" id="IPR006085">
    <property type="entry name" value="XPG_DNA_repair_N"/>
</dbReference>
<dbReference type="PANTHER" id="PTHR11081:SF9">
    <property type="entry name" value="FLAP ENDONUCLEASE 1"/>
    <property type="match status" value="1"/>
</dbReference>
<dbReference type="PANTHER" id="PTHR11081">
    <property type="entry name" value="FLAP ENDONUCLEASE FAMILY MEMBER"/>
    <property type="match status" value="1"/>
</dbReference>
<dbReference type="Pfam" id="PF00867">
    <property type="entry name" value="XPG_I"/>
    <property type="match status" value="1"/>
</dbReference>
<dbReference type="Pfam" id="PF00752">
    <property type="entry name" value="XPG_N"/>
    <property type="match status" value="1"/>
</dbReference>
<dbReference type="PRINTS" id="PR00853">
    <property type="entry name" value="XPGRADSUPER"/>
</dbReference>
<dbReference type="SMART" id="SM00279">
    <property type="entry name" value="HhH2"/>
    <property type="match status" value="1"/>
</dbReference>
<dbReference type="SMART" id="SM00484">
    <property type="entry name" value="XPGI"/>
    <property type="match status" value="1"/>
</dbReference>
<dbReference type="SMART" id="SM00485">
    <property type="entry name" value="XPGN"/>
    <property type="match status" value="1"/>
</dbReference>
<dbReference type="SUPFAM" id="SSF47807">
    <property type="entry name" value="5' to 3' exonuclease, C-terminal subdomain"/>
    <property type="match status" value="1"/>
</dbReference>
<dbReference type="SUPFAM" id="SSF88723">
    <property type="entry name" value="PIN domain-like"/>
    <property type="match status" value="1"/>
</dbReference>
<dbReference type="PROSITE" id="PS00842">
    <property type="entry name" value="XPG_2"/>
    <property type="match status" value="1"/>
</dbReference>
<organism>
    <name type="scientific">Tetrahymena thermophila (strain SB210)</name>
    <dbReference type="NCBI Taxonomy" id="312017"/>
    <lineage>
        <taxon>Eukaryota</taxon>
        <taxon>Sar</taxon>
        <taxon>Alveolata</taxon>
        <taxon>Ciliophora</taxon>
        <taxon>Intramacronucleata</taxon>
        <taxon>Oligohymenophorea</taxon>
        <taxon>Hymenostomatida</taxon>
        <taxon>Tetrahymenina</taxon>
        <taxon>Tetrahymenidae</taxon>
        <taxon>Tetrahymena</taxon>
    </lineage>
</organism>
<gene>
    <name evidence="1" type="primary">FEN1</name>
    <name type="ORF">TTHERM_00437617</name>
</gene>
<keyword id="KW-0227">DNA damage</keyword>
<keyword id="KW-0234">DNA repair</keyword>
<keyword id="KW-0235">DNA replication</keyword>
<keyword id="KW-0255">Endonuclease</keyword>
<keyword id="KW-0269">Exonuclease</keyword>
<keyword id="KW-0378">Hydrolase</keyword>
<keyword id="KW-0460">Magnesium</keyword>
<keyword id="KW-0479">Metal-binding</keyword>
<keyword id="KW-0496">Mitochondrion</keyword>
<keyword id="KW-0540">Nuclease</keyword>
<keyword id="KW-0539">Nucleus</keyword>
<keyword id="KW-0597">Phosphoprotein</keyword>
<keyword id="KW-1185">Reference proteome</keyword>